<protein>
    <recommendedName>
        <fullName evidence="1">Probable 2-phosphosulfolactate phosphatase</fullName>
        <ecNumber evidence="1">3.1.3.71</ecNumber>
    </recommendedName>
</protein>
<keyword id="KW-0378">Hydrolase</keyword>
<keyword id="KW-0460">Magnesium</keyword>
<gene>
    <name evidence="1" type="primary">comB</name>
    <name type="ordered locus">CLD_0930</name>
</gene>
<dbReference type="EC" id="3.1.3.71" evidence="1"/>
<dbReference type="EMBL" id="CP000939">
    <property type="protein sequence ID" value="ACA46797.1"/>
    <property type="molecule type" value="Genomic_DNA"/>
</dbReference>
<dbReference type="RefSeq" id="WP_015958152.1">
    <property type="nucleotide sequence ID" value="NC_010516.1"/>
</dbReference>
<dbReference type="SMR" id="B1IH09"/>
<dbReference type="KEGG" id="cbb:CLD_0930"/>
<dbReference type="HOGENOM" id="CLU_070028_0_0_9"/>
<dbReference type="Proteomes" id="UP000008541">
    <property type="component" value="Chromosome"/>
</dbReference>
<dbReference type="GO" id="GO:0050532">
    <property type="term" value="F:2-phosphosulfolactate phosphatase activity"/>
    <property type="evidence" value="ECO:0007669"/>
    <property type="project" value="UniProtKB-UniRule"/>
</dbReference>
<dbReference type="GO" id="GO:0000287">
    <property type="term" value="F:magnesium ion binding"/>
    <property type="evidence" value="ECO:0007669"/>
    <property type="project" value="UniProtKB-UniRule"/>
</dbReference>
<dbReference type="GO" id="GO:0050545">
    <property type="term" value="F:sulfopyruvate decarboxylase activity"/>
    <property type="evidence" value="ECO:0007669"/>
    <property type="project" value="TreeGrafter"/>
</dbReference>
<dbReference type="FunFam" id="3.90.1560.10:FF:000001">
    <property type="entry name" value="Probable 2-phosphosulfolactate phosphatase"/>
    <property type="match status" value="1"/>
</dbReference>
<dbReference type="Gene3D" id="3.90.1560.10">
    <property type="entry name" value="ComB-like"/>
    <property type="match status" value="1"/>
</dbReference>
<dbReference type="HAMAP" id="MF_00490">
    <property type="entry name" value="ComB"/>
    <property type="match status" value="1"/>
</dbReference>
<dbReference type="InterPro" id="IPR005238">
    <property type="entry name" value="ComB-like"/>
</dbReference>
<dbReference type="InterPro" id="IPR036702">
    <property type="entry name" value="ComB-like_sf"/>
</dbReference>
<dbReference type="NCBIfam" id="NF002052">
    <property type="entry name" value="PRK00886.1-1"/>
    <property type="match status" value="1"/>
</dbReference>
<dbReference type="NCBIfam" id="NF002055">
    <property type="entry name" value="PRK00886.1-4"/>
    <property type="match status" value="1"/>
</dbReference>
<dbReference type="PANTHER" id="PTHR37311">
    <property type="entry name" value="2-PHOSPHOSULFOLACTATE PHOSPHATASE-RELATED"/>
    <property type="match status" value="1"/>
</dbReference>
<dbReference type="PANTHER" id="PTHR37311:SF1">
    <property type="entry name" value="2-PHOSPHOSULFOLACTATE PHOSPHATASE-RELATED"/>
    <property type="match status" value="1"/>
</dbReference>
<dbReference type="Pfam" id="PF04029">
    <property type="entry name" value="2-ph_phosp"/>
    <property type="match status" value="1"/>
</dbReference>
<dbReference type="SUPFAM" id="SSF142823">
    <property type="entry name" value="ComB-like"/>
    <property type="match status" value="1"/>
</dbReference>
<accession>B1IH09</accession>
<feature type="chain" id="PRO_1000126224" description="Probable 2-phosphosulfolactate phosphatase">
    <location>
        <begin position="1"/>
        <end position="239"/>
    </location>
</feature>
<evidence type="ECO:0000255" key="1">
    <source>
        <dbReference type="HAMAP-Rule" id="MF_00490"/>
    </source>
</evidence>
<comment type="catalytic activity">
    <reaction evidence="1">
        <text>(2R)-O-phospho-3-sulfolactate + H2O = (2R)-3-sulfolactate + phosphate</text>
        <dbReference type="Rhea" id="RHEA:23416"/>
        <dbReference type="ChEBI" id="CHEBI:15377"/>
        <dbReference type="ChEBI" id="CHEBI:15597"/>
        <dbReference type="ChEBI" id="CHEBI:43474"/>
        <dbReference type="ChEBI" id="CHEBI:58738"/>
        <dbReference type="EC" id="3.1.3.71"/>
    </reaction>
</comment>
<comment type="cofactor">
    <cofactor evidence="1">
        <name>Mg(2+)</name>
        <dbReference type="ChEBI" id="CHEBI:18420"/>
    </cofactor>
</comment>
<comment type="similarity">
    <text evidence="1">Belongs to the ComB family.</text>
</comment>
<sequence length="239" mass="26749">MNIDIVISADHIDEKRLINKTVIIIDILRATSVITTAINNGCKKVIPVLTVEEAKDIAKNSKEDIILGGERNALKIDGFNFSNSPLEYTKNYVEGKTVVLSTTNGTRAINNSFNAKTILISALINSKATAKAIDKLNEDLIIINSGTNGQFSIDDFICSGYLIDCLYNIRKDLELSDIAKTAHYIYMNNKDIESFVKKATHYSRLKSLNLEKDLEYCFQKDIIDVVPQYKDGYIIKSNI</sequence>
<proteinExistence type="inferred from homology"/>
<reference key="1">
    <citation type="journal article" date="2007" name="PLoS ONE">
        <title>Analysis of the neurotoxin complex genes in Clostridium botulinum A1-A4 and B1 strains: BoNT/A3, /Ba4 and /B1 clusters are located within plasmids.</title>
        <authorList>
            <person name="Smith T.J."/>
            <person name="Hill K.K."/>
            <person name="Foley B.T."/>
            <person name="Detter J.C."/>
            <person name="Munk A.C."/>
            <person name="Bruce D.C."/>
            <person name="Doggett N.A."/>
            <person name="Smith L.A."/>
            <person name="Marks J.D."/>
            <person name="Xie G."/>
            <person name="Brettin T.S."/>
        </authorList>
    </citation>
    <scope>NUCLEOTIDE SEQUENCE [LARGE SCALE GENOMIC DNA]</scope>
    <source>
        <strain>Okra / Type B1</strain>
    </source>
</reference>
<name>COMB_CLOBK</name>
<organism>
    <name type="scientific">Clostridium botulinum (strain Okra / Type B1)</name>
    <dbReference type="NCBI Taxonomy" id="498213"/>
    <lineage>
        <taxon>Bacteria</taxon>
        <taxon>Bacillati</taxon>
        <taxon>Bacillota</taxon>
        <taxon>Clostridia</taxon>
        <taxon>Eubacteriales</taxon>
        <taxon>Clostridiaceae</taxon>
        <taxon>Clostridium</taxon>
    </lineage>
</organism>